<proteinExistence type="inferred from homology"/>
<sequence length="636" mass="71783">MVKFLVIFWFVVISFSHVSAQVCLERSGFFTPNSTYDLNRRVLLSSLPLNVTAIDGFYTTWIGEHPNRAYGLGMCVPGTDAHSCSDCIILANARLLQNCTNQTEAIVWRIDRTVCLVRYSNRSFYSSLGMEILRSDNYTRDFQANLTDLEITWEALMIRMIDQASYLYYAAGIRKLETSISRIYGFVQCSRDLSLQNCTKCLQQNVVEYRSCCRGRQGGIILRPSCFIRWELYPFLGLFDNIRPRQKDGKSISTGAIVAIIVVPILLLALGVGLWKRRKAYKTKTTKIADDITTSGSLQFEFKAIEAATCNFHNVNKLGHGGFGEVYKGTFPNGTEVAVKRLSKTSGQGEEEFKNEVFLVAKLQHRNLVKLLGYAVKGDEKILVYEFLPNKSLDHFLFDPVKKGQLDWTRRYNIINGITRGIVYLHQDSRLTIIHRDLKAGNILLDADMNPKIVDFGVARNFRVDQTEATTARVVGTIGYMPPEYVTNGQFSTKSDVYSFGVLILEIIGGKKNSSINETDGSISNLVTYVWRLWNNEPLLELVDAPMGENYDRNEVIRCIHIGLLCVQENPADRPTMSTVFHMLTNTSITLHVPQPPGFVFRVRFKPNPLADRLQRGPSTSMSFSCSVSVTCVSPR</sequence>
<reference key="1">
    <citation type="journal article" date="1999" name="Nature">
        <title>Sequence and analysis of chromosome 4 of the plant Arabidopsis thaliana.</title>
        <authorList>
            <person name="Mayer K.F.X."/>
            <person name="Schueller C."/>
            <person name="Wambutt R."/>
            <person name="Murphy G."/>
            <person name="Volckaert G."/>
            <person name="Pohl T."/>
            <person name="Duesterhoeft A."/>
            <person name="Stiekema W."/>
            <person name="Entian K.-D."/>
            <person name="Terryn N."/>
            <person name="Harris B."/>
            <person name="Ansorge W."/>
            <person name="Brandt P."/>
            <person name="Grivell L.A."/>
            <person name="Rieger M."/>
            <person name="Weichselgartner M."/>
            <person name="de Simone V."/>
            <person name="Obermaier B."/>
            <person name="Mache R."/>
            <person name="Mueller M."/>
            <person name="Kreis M."/>
            <person name="Delseny M."/>
            <person name="Puigdomenech P."/>
            <person name="Watson M."/>
            <person name="Schmidtheini T."/>
            <person name="Reichert B."/>
            <person name="Portetelle D."/>
            <person name="Perez-Alonso M."/>
            <person name="Boutry M."/>
            <person name="Bancroft I."/>
            <person name="Vos P."/>
            <person name="Hoheisel J."/>
            <person name="Zimmermann W."/>
            <person name="Wedler H."/>
            <person name="Ridley P."/>
            <person name="Langham S.-A."/>
            <person name="McCullagh B."/>
            <person name="Bilham L."/>
            <person name="Robben J."/>
            <person name="van der Schueren J."/>
            <person name="Grymonprez B."/>
            <person name="Chuang Y.-J."/>
            <person name="Vandenbussche F."/>
            <person name="Braeken M."/>
            <person name="Weltjens I."/>
            <person name="Voet M."/>
            <person name="Bastiaens I."/>
            <person name="Aert R."/>
            <person name="Defoor E."/>
            <person name="Weitzenegger T."/>
            <person name="Bothe G."/>
            <person name="Ramsperger U."/>
            <person name="Hilbert H."/>
            <person name="Braun M."/>
            <person name="Holzer E."/>
            <person name="Brandt A."/>
            <person name="Peters S."/>
            <person name="van Staveren M."/>
            <person name="Dirkse W."/>
            <person name="Mooijman P."/>
            <person name="Klein Lankhorst R."/>
            <person name="Rose M."/>
            <person name="Hauf J."/>
            <person name="Koetter P."/>
            <person name="Berneiser S."/>
            <person name="Hempel S."/>
            <person name="Feldpausch M."/>
            <person name="Lamberth S."/>
            <person name="Van den Daele H."/>
            <person name="De Keyser A."/>
            <person name="Buysshaert C."/>
            <person name="Gielen J."/>
            <person name="Villarroel R."/>
            <person name="De Clercq R."/>
            <person name="van Montagu M."/>
            <person name="Rogers J."/>
            <person name="Cronin A."/>
            <person name="Quail M.A."/>
            <person name="Bray-Allen S."/>
            <person name="Clark L."/>
            <person name="Doggett J."/>
            <person name="Hall S."/>
            <person name="Kay M."/>
            <person name="Lennard N."/>
            <person name="McLay K."/>
            <person name="Mayes R."/>
            <person name="Pettett A."/>
            <person name="Rajandream M.A."/>
            <person name="Lyne M."/>
            <person name="Benes V."/>
            <person name="Rechmann S."/>
            <person name="Borkova D."/>
            <person name="Bloecker H."/>
            <person name="Scharfe M."/>
            <person name="Grimm M."/>
            <person name="Loehnert T.-H."/>
            <person name="Dose S."/>
            <person name="de Haan M."/>
            <person name="Maarse A.C."/>
            <person name="Schaefer M."/>
            <person name="Mueller-Auer S."/>
            <person name="Gabel C."/>
            <person name="Fuchs M."/>
            <person name="Fartmann B."/>
            <person name="Granderath K."/>
            <person name="Dauner D."/>
            <person name="Herzl A."/>
            <person name="Neumann S."/>
            <person name="Argiriou A."/>
            <person name="Vitale D."/>
            <person name="Liguori R."/>
            <person name="Piravandi E."/>
            <person name="Massenet O."/>
            <person name="Quigley F."/>
            <person name="Clabauld G."/>
            <person name="Muendlein A."/>
            <person name="Felber R."/>
            <person name="Schnabl S."/>
            <person name="Hiller R."/>
            <person name="Schmidt W."/>
            <person name="Lecharny A."/>
            <person name="Aubourg S."/>
            <person name="Chefdor F."/>
            <person name="Cooke R."/>
            <person name="Berger C."/>
            <person name="Monfort A."/>
            <person name="Casacuberta E."/>
            <person name="Gibbons T."/>
            <person name="Weber N."/>
            <person name="Vandenbol M."/>
            <person name="Bargues M."/>
            <person name="Terol J."/>
            <person name="Torres A."/>
            <person name="Perez-Perez A."/>
            <person name="Purnelle B."/>
            <person name="Bent E."/>
            <person name="Johnson S."/>
            <person name="Tacon D."/>
            <person name="Jesse T."/>
            <person name="Heijnen L."/>
            <person name="Schwarz S."/>
            <person name="Scholler P."/>
            <person name="Heber S."/>
            <person name="Francs P."/>
            <person name="Bielke C."/>
            <person name="Frishman D."/>
            <person name="Haase D."/>
            <person name="Lemcke K."/>
            <person name="Mewes H.-W."/>
            <person name="Stocker S."/>
            <person name="Zaccaria P."/>
            <person name="Bevan M."/>
            <person name="Wilson R.K."/>
            <person name="de la Bastide M."/>
            <person name="Habermann K."/>
            <person name="Parnell L."/>
            <person name="Dedhia N."/>
            <person name="Gnoj L."/>
            <person name="Schutz K."/>
            <person name="Huang E."/>
            <person name="Spiegel L."/>
            <person name="Sekhon M."/>
            <person name="Murray J."/>
            <person name="Sheet P."/>
            <person name="Cordes M."/>
            <person name="Abu-Threideh J."/>
            <person name="Stoneking T."/>
            <person name="Kalicki J."/>
            <person name="Graves T."/>
            <person name="Harmon G."/>
            <person name="Edwards J."/>
            <person name="Latreille P."/>
            <person name="Courtney L."/>
            <person name="Cloud J."/>
            <person name="Abbott A."/>
            <person name="Scott K."/>
            <person name="Johnson D."/>
            <person name="Minx P."/>
            <person name="Bentley D."/>
            <person name="Fulton B."/>
            <person name="Miller N."/>
            <person name="Greco T."/>
            <person name="Kemp K."/>
            <person name="Kramer J."/>
            <person name="Fulton L."/>
            <person name="Mardis E."/>
            <person name="Dante M."/>
            <person name="Pepin K."/>
            <person name="Hillier L.W."/>
            <person name="Nelson J."/>
            <person name="Spieth J."/>
            <person name="Ryan E."/>
            <person name="Andrews S."/>
            <person name="Geisel C."/>
            <person name="Layman D."/>
            <person name="Du H."/>
            <person name="Ali J."/>
            <person name="Berghoff A."/>
            <person name="Jones K."/>
            <person name="Drone K."/>
            <person name="Cotton M."/>
            <person name="Joshu C."/>
            <person name="Antonoiu B."/>
            <person name="Zidanic M."/>
            <person name="Strong C."/>
            <person name="Sun H."/>
            <person name="Lamar B."/>
            <person name="Yordan C."/>
            <person name="Ma P."/>
            <person name="Zhong J."/>
            <person name="Preston R."/>
            <person name="Vil D."/>
            <person name="Shekher M."/>
            <person name="Matero A."/>
            <person name="Shah R."/>
            <person name="Swaby I.K."/>
            <person name="O'Shaughnessy A."/>
            <person name="Rodriguez M."/>
            <person name="Hoffman J."/>
            <person name="Till S."/>
            <person name="Granat S."/>
            <person name="Shohdy N."/>
            <person name="Hasegawa A."/>
            <person name="Hameed A."/>
            <person name="Lodhi M."/>
            <person name="Johnson A."/>
            <person name="Chen E."/>
            <person name="Marra M.A."/>
            <person name="Martienssen R."/>
            <person name="McCombie W.R."/>
        </authorList>
    </citation>
    <scope>NUCLEOTIDE SEQUENCE [LARGE SCALE GENOMIC DNA]</scope>
    <source>
        <strain>cv. Columbia</strain>
    </source>
</reference>
<reference key="2">
    <citation type="journal article" date="2017" name="Plant J.">
        <title>Araport11: a complete reannotation of the Arabidopsis thaliana reference genome.</title>
        <authorList>
            <person name="Cheng C.Y."/>
            <person name="Krishnakumar V."/>
            <person name="Chan A.P."/>
            <person name="Thibaud-Nissen F."/>
            <person name="Schobel S."/>
            <person name="Town C.D."/>
        </authorList>
    </citation>
    <scope>GENOME REANNOTATION</scope>
    <source>
        <strain>cv. Columbia</strain>
    </source>
</reference>
<reference key="3">
    <citation type="journal article" date="2001" name="Plant Physiol.">
        <title>A superfamily of proteins with novel cysteine-rich repeats.</title>
        <authorList>
            <person name="Chen Z."/>
        </authorList>
    </citation>
    <scope>GENE FAMILY ORGANIZATION</scope>
    <scope>NOMENCLATURE</scope>
</reference>
<evidence type="ECO:0000255" key="1"/>
<evidence type="ECO:0000255" key="2">
    <source>
        <dbReference type="PROSITE-ProRule" id="PRU00159"/>
    </source>
</evidence>
<evidence type="ECO:0000255" key="3">
    <source>
        <dbReference type="PROSITE-ProRule" id="PRU00806"/>
    </source>
</evidence>
<evidence type="ECO:0000255" key="4">
    <source>
        <dbReference type="PROSITE-ProRule" id="PRU10027"/>
    </source>
</evidence>
<evidence type="ECO:0000305" key="5"/>
<name>CRK24_ARATH</name>
<protein>
    <recommendedName>
        <fullName>Cysteine-rich receptor-like protein kinase 24</fullName>
        <shortName>Cysteine-rich RLK24</shortName>
        <ecNumber>2.7.11.-</ecNumber>
    </recommendedName>
</protein>
<feature type="signal peptide" evidence="1">
    <location>
        <begin position="1"/>
        <end position="20"/>
    </location>
</feature>
<feature type="chain" id="PRO_0000295071" description="Cysteine-rich receptor-like protein kinase 24">
    <location>
        <begin position="21"/>
        <end position="636"/>
    </location>
</feature>
<feature type="topological domain" description="Extracellular" evidence="1">
    <location>
        <begin position="21"/>
        <end position="254"/>
    </location>
</feature>
<feature type="transmembrane region" description="Helical" evidence="1">
    <location>
        <begin position="255"/>
        <end position="275"/>
    </location>
</feature>
<feature type="topological domain" description="Cytoplasmic" evidence="1">
    <location>
        <begin position="276"/>
        <end position="636"/>
    </location>
</feature>
<feature type="domain" description="Gnk2-homologous 1" evidence="3">
    <location>
        <begin position="21"/>
        <end position="124"/>
    </location>
</feature>
<feature type="domain" description="Gnk2-homologous 2" evidence="3">
    <location>
        <begin position="130"/>
        <end position="235"/>
    </location>
</feature>
<feature type="domain" description="Protein kinase" evidence="2">
    <location>
        <begin position="312"/>
        <end position="585"/>
    </location>
</feature>
<feature type="active site" description="Proton acceptor" evidence="2 4">
    <location>
        <position position="437"/>
    </location>
</feature>
<feature type="binding site" evidence="2">
    <location>
        <begin position="318"/>
        <end position="326"/>
    </location>
    <ligand>
        <name>ATP</name>
        <dbReference type="ChEBI" id="CHEBI:30616"/>
    </ligand>
</feature>
<feature type="binding site" evidence="2">
    <location>
        <position position="340"/>
    </location>
    <ligand>
        <name>ATP</name>
        <dbReference type="ChEBI" id="CHEBI:30616"/>
    </ligand>
</feature>
<feature type="glycosylation site" description="N-linked (GlcNAc...) asparagine" evidence="1">
    <location>
        <position position="33"/>
    </location>
</feature>
<feature type="glycosylation site" description="N-linked (GlcNAc...) asparagine" evidence="1">
    <location>
        <position position="50"/>
    </location>
</feature>
<feature type="glycosylation site" description="N-linked (GlcNAc...) asparagine" evidence="1">
    <location>
        <position position="98"/>
    </location>
</feature>
<feature type="glycosylation site" description="N-linked (GlcNAc...) asparagine" evidence="1">
    <location>
        <position position="101"/>
    </location>
</feature>
<feature type="glycosylation site" description="N-linked (GlcNAc...) asparagine" evidence="1">
    <location>
        <position position="121"/>
    </location>
</feature>
<feature type="glycosylation site" description="N-linked (GlcNAc...) asparagine" evidence="1">
    <location>
        <position position="137"/>
    </location>
</feature>
<feature type="glycosylation site" description="N-linked (GlcNAc...) asparagine" evidence="1">
    <location>
        <position position="145"/>
    </location>
</feature>
<feature type="glycosylation site" description="N-linked (GlcNAc...) asparagine" evidence="1">
    <location>
        <position position="197"/>
    </location>
</feature>
<organism>
    <name type="scientific">Arabidopsis thaliana</name>
    <name type="common">Mouse-ear cress</name>
    <dbReference type="NCBI Taxonomy" id="3702"/>
    <lineage>
        <taxon>Eukaryota</taxon>
        <taxon>Viridiplantae</taxon>
        <taxon>Streptophyta</taxon>
        <taxon>Embryophyta</taxon>
        <taxon>Tracheophyta</taxon>
        <taxon>Spermatophyta</taxon>
        <taxon>Magnoliopsida</taxon>
        <taxon>eudicotyledons</taxon>
        <taxon>Gunneridae</taxon>
        <taxon>Pentapetalae</taxon>
        <taxon>rosids</taxon>
        <taxon>malvids</taxon>
        <taxon>Brassicales</taxon>
        <taxon>Brassicaceae</taxon>
        <taxon>Camelineae</taxon>
        <taxon>Arabidopsis</taxon>
    </lineage>
</organism>
<gene>
    <name type="primary">CRK24</name>
    <name type="ordered locus">At4g23320</name>
    <name type="ORF">F16G20.20</name>
    <name type="ORF">F21P8.210</name>
</gene>
<accession>O65483</accession>
<accession>F4JNI0</accession>
<comment type="catalytic activity">
    <reaction>
        <text>L-seryl-[protein] + ATP = O-phospho-L-seryl-[protein] + ADP + H(+)</text>
        <dbReference type="Rhea" id="RHEA:17989"/>
        <dbReference type="Rhea" id="RHEA-COMP:9863"/>
        <dbReference type="Rhea" id="RHEA-COMP:11604"/>
        <dbReference type="ChEBI" id="CHEBI:15378"/>
        <dbReference type="ChEBI" id="CHEBI:29999"/>
        <dbReference type="ChEBI" id="CHEBI:30616"/>
        <dbReference type="ChEBI" id="CHEBI:83421"/>
        <dbReference type="ChEBI" id="CHEBI:456216"/>
    </reaction>
</comment>
<comment type="catalytic activity">
    <reaction>
        <text>L-threonyl-[protein] + ATP = O-phospho-L-threonyl-[protein] + ADP + H(+)</text>
        <dbReference type="Rhea" id="RHEA:46608"/>
        <dbReference type="Rhea" id="RHEA-COMP:11060"/>
        <dbReference type="Rhea" id="RHEA-COMP:11605"/>
        <dbReference type="ChEBI" id="CHEBI:15378"/>
        <dbReference type="ChEBI" id="CHEBI:30013"/>
        <dbReference type="ChEBI" id="CHEBI:30616"/>
        <dbReference type="ChEBI" id="CHEBI:61977"/>
        <dbReference type="ChEBI" id="CHEBI:456216"/>
    </reaction>
</comment>
<comment type="subcellular location">
    <subcellularLocation>
        <location evidence="5">Membrane</location>
        <topology evidence="5">Single-pass membrane protein</topology>
    </subcellularLocation>
</comment>
<comment type="similarity">
    <text evidence="2">Belongs to the protein kinase superfamily. Ser/Thr protein kinase family. CRK subfamily.</text>
</comment>
<comment type="sequence caution" evidence="5">
    <conflict type="erroneous gene model prediction">
        <sequence resource="EMBL-CDS" id="CAA18479"/>
    </conflict>
</comment>
<comment type="sequence caution" evidence="5">
    <conflict type="frameshift">
        <sequence resource="EMBL-CDS" id="CAA18479"/>
    </conflict>
</comment>
<comment type="sequence caution" evidence="5">
    <conflict type="erroneous gene model prediction">
        <sequence resource="EMBL-CDS" id="CAA20453"/>
    </conflict>
</comment>
<comment type="sequence caution" evidence="5">
    <conflict type="frameshift">
        <sequence resource="EMBL-CDS" id="CAA20453"/>
    </conflict>
</comment>
<comment type="sequence caution" evidence="5">
    <conflict type="erroneous gene model prediction">
        <sequence resource="EMBL-CDS" id="CAB79287"/>
    </conflict>
</comment>
<comment type="sequence caution" evidence="5">
    <conflict type="frameshift">
        <sequence resource="EMBL-CDS" id="CAB79287"/>
    </conflict>
</comment>
<dbReference type="EC" id="2.7.11.-"/>
<dbReference type="EMBL" id="AL022347">
    <property type="protein sequence ID" value="CAA18479.1"/>
    <property type="status" value="ALT_SEQ"/>
    <property type="molecule type" value="Genomic_DNA"/>
</dbReference>
<dbReference type="EMBL" id="AL031326">
    <property type="protein sequence ID" value="CAA20453.1"/>
    <property type="status" value="ALT_SEQ"/>
    <property type="molecule type" value="Genomic_DNA"/>
</dbReference>
<dbReference type="EMBL" id="AL161559">
    <property type="protein sequence ID" value="CAB79287.1"/>
    <property type="status" value="ALT_SEQ"/>
    <property type="molecule type" value="Genomic_DNA"/>
</dbReference>
<dbReference type="EMBL" id="CP002687">
    <property type="status" value="NOT_ANNOTATED_CDS"/>
    <property type="molecule type" value="Genomic_DNA"/>
</dbReference>
<dbReference type="PIR" id="T04849">
    <property type="entry name" value="T04849"/>
</dbReference>
<dbReference type="SMR" id="O65483"/>
<dbReference type="STRING" id="3702.O65483"/>
<dbReference type="GlyCosmos" id="O65483">
    <property type="glycosylation" value="8 sites, No reported glycans"/>
</dbReference>
<dbReference type="GlyGen" id="O65483">
    <property type="glycosylation" value="8 sites"/>
</dbReference>
<dbReference type="Araport" id="AT4G23320"/>
<dbReference type="TAIR" id="AT4G23320">
    <property type="gene designation" value="CRK24"/>
</dbReference>
<dbReference type="InParanoid" id="O65483"/>
<dbReference type="PhylomeDB" id="O65483"/>
<dbReference type="PRO" id="PR:O65483"/>
<dbReference type="Proteomes" id="UP000006548">
    <property type="component" value="Chromosome 4"/>
</dbReference>
<dbReference type="ExpressionAtlas" id="O65483">
    <property type="expression patterns" value="baseline and differential"/>
</dbReference>
<dbReference type="GO" id="GO:0005886">
    <property type="term" value="C:plasma membrane"/>
    <property type="evidence" value="ECO:0000318"/>
    <property type="project" value="GO_Central"/>
</dbReference>
<dbReference type="GO" id="GO:0005524">
    <property type="term" value="F:ATP binding"/>
    <property type="evidence" value="ECO:0007669"/>
    <property type="project" value="UniProtKB-KW"/>
</dbReference>
<dbReference type="GO" id="GO:0106310">
    <property type="term" value="F:protein serine kinase activity"/>
    <property type="evidence" value="ECO:0007669"/>
    <property type="project" value="RHEA"/>
</dbReference>
<dbReference type="GO" id="GO:0004674">
    <property type="term" value="F:protein serine/threonine kinase activity"/>
    <property type="evidence" value="ECO:0000318"/>
    <property type="project" value="GO_Central"/>
</dbReference>
<dbReference type="GO" id="GO:0042742">
    <property type="term" value="P:defense response to bacterium"/>
    <property type="evidence" value="ECO:0000318"/>
    <property type="project" value="GO_Central"/>
</dbReference>
<dbReference type="GO" id="GO:0009626">
    <property type="term" value="P:plant-type hypersensitive response"/>
    <property type="evidence" value="ECO:0000318"/>
    <property type="project" value="GO_Central"/>
</dbReference>
<dbReference type="GO" id="GO:0007165">
    <property type="term" value="P:signal transduction"/>
    <property type="evidence" value="ECO:0000318"/>
    <property type="project" value="GO_Central"/>
</dbReference>
<dbReference type="CDD" id="cd23509">
    <property type="entry name" value="Gnk2-like"/>
    <property type="match status" value="2"/>
</dbReference>
<dbReference type="CDD" id="cd14066">
    <property type="entry name" value="STKc_IRAK"/>
    <property type="match status" value="1"/>
</dbReference>
<dbReference type="FunFam" id="1.10.510.10:FF:000129">
    <property type="entry name" value="cysteine-rich receptor-like protein kinase 10"/>
    <property type="match status" value="1"/>
</dbReference>
<dbReference type="FunFam" id="3.30.430.20:FF:000007">
    <property type="entry name" value="Cysteine-rich receptor-like protein kinase 11"/>
    <property type="match status" value="1"/>
</dbReference>
<dbReference type="FunFam" id="3.30.430.20:FF:000003">
    <property type="entry name" value="Cysteine-rich RLK (RECEPTOR-like protein kinase) 10"/>
    <property type="match status" value="1"/>
</dbReference>
<dbReference type="FunFam" id="3.30.200.20:FF:000727">
    <property type="entry name" value="Cysteine-rich RLK (RECEPTOR-like protein kinase) 23"/>
    <property type="match status" value="1"/>
</dbReference>
<dbReference type="Gene3D" id="3.30.430.20">
    <property type="entry name" value="Gnk2 domain, C-X8-C-X2-C motif"/>
    <property type="match status" value="2"/>
</dbReference>
<dbReference type="Gene3D" id="3.30.200.20">
    <property type="entry name" value="Phosphorylase Kinase, domain 1"/>
    <property type="match status" value="1"/>
</dbReference>
<dbReference type="Gene3D" id="1.10.510.10">
    <property type="entry name" value="Transferase(Phosphotransferase) domain 1"/>
    <property type="match status" value="1"/>
</dbReference>
<dbReference type="InterPro" id="IPR002902">
    <property type="entry name" value="GNK2"/>
</dbReference>
<dbReference type="InterPro" id="IPR038408">
    <property type="entry name" value="GNK2_sf"/>
</dbReference>
<dbReference type="InterPro" id="IPR011009">
    <property type="entry name" value="Kinase-like_dom_sf"/>
</dbReference>
<dbReference type="InterPro" id="IPR000719">
    <property type="entry name" value="Prot_kinase_dom"/>
</dbReference>
<dbReference type="InterPro" id="IPR017441">
    <property type="entry name" value="Protein_kinase_ATP_BS"/>
</dbReference>
<dbReference type="InterPro" id="IPR001245">
    <property type="entry name" value="Ser-Thr/Tyr_kinase_cat_dom"/>
</dbReference>
<dbReference type="InterPro" id="IPR008271">
    <property type="entry name" value="Ser/Thr_kinase_AS"/>
</dbReference>
<dbReference type="PANTHER" id="PTHR27002:SF399">
    <property type="entry name" value="CYSTEINE-RICH RECEPTOR-LIKE PROTEIN KINASE 24"/>
    <property type="match status" value="1"/>
</dbReference>
<dbReference type="PANTHER" id="PTHR27002">
    <property type="entry name" value="RECEPTOR-LIKE SERINE/THREONINE-PROTEIN KINASE SD1-8"/>
    <property type="match status" value="1"/>
</dbReference>
<dbReference type="Pfam" id="PF07714">
    <property type="entry name" value="PK_Tyr_Ser-Thr"/>
    <property type="match status" value="1"/>
</dbReference>
<dbReference type="Pfam" id="PF01657">
    <property type="entry name" value="Stress-antifung"/>
    <property type="match status" value="2"/>
</dbReference>
<dbReference type="SMART" id="SM00220">
    <property type="entry name" value="S_TKc"/>
    <property type="match status" value="1"/>
</dbReference>
<dbReference type="SUPFAM" id="SSF56112">
    <property type="entry name" value="Protein kinase-like (PK-like)"/>
    <property type="match status" value="1"/>
</dbReference>
<dbReference type="PROSITE" id="PS51473">
    <property type="entry name" value="GNK2"/>
    <property type="match status" value="2"/>
</dbReference>
<dbReference type="PROSITE" id="PS00107">
    <property type="entry name" value="PROTEIN_KINASE_ATP"/>
    <property type="match status" value="1"/>
</dbReference>
<dbReference type="PROSITE" id="PS50011">
    <property type="entry name" value="PROTEIN_KINASE_DOM"/>
    <property type="match status" value="1"/>
</dbReference>
<dbReference type="PROSITE" id="PS00108">
    <property type="entry name" value="PROTEIN_KINASE_ST"/>
    <property type="match status" value="1"/>
</dbReference>
<keyword id="KW-0067">ATP-binding</keyword>
<keyword id="KW-0325">Glycoprotein</keyword>
<keyword id="KW-0418">Kinase</keyword>
<keyword id="KW-0472">Membrane</keyword>
<keyword id="KW-0547">Nucleotide-binding</keyword>
<keyword id="KW-0675">Receptor</keyword>
<keyword id="KW-1185">Reference proteome</keyword>
<keyword id="KW-0677">Repeat</keyword>
<keyword id="KW-0723">Serine/threonine-protein kinase</keyword>
<keyword id="KW-0732">Signal</keyword>
<keyword id="KW-0808">Transferase</keyword>
<keyword id="KW-0812">Transmembrane</keyword>
<keyword id="KW-1133">Transmembrane helix</keyword>